<protein>
    <recommendedName>
        <fullName evidence="1">Polyribonucleotide nucleotidyltransferase</fullName>
        <ecNumber evidence="1">2.7.7.8</ecNumber>
    </recommendedName>
    <alternativeName>
        <fullName evidence="1">Polynucleotide phosphorylase</fullName>
        <shortName evidence="1">PNPase</shortName>
    </alternativeName>
</protein>
<gene>
    <name evidence="1" type="primary">pnp</name>
    <name type="ordered locus">Cla_0508</name>
</gene>
<name>PNP_CAMLR</name>
<accession>B9KFM1</accession>
<sequence length="702" mass="77979">MRHKININNHIEIFDTDKVAKQAAGAVLMQEKNAVVLATVAREEKMVEEDFLPLTVQYIEKAYAAGKIPGGYVKRETKPGDSETLSARIIDRSLRPLFPKGYAYPTQIVVMVLSADPEVDLQVMSLNAASVALYLSDIPIKAPVCGVRIGRINNEFVLNPSNSELKNSTLDLYVAGVKDELLMIEMRALSNKKDNQHCMNELSEDDTLKALDFASSAILRGSNEYEKAFAAYRKNSKLEFKIESDNIQIIDYIKNTYITKLKIAINQMAKSERASEILQIAKEIESESMAIENEWKFEDIEKALHVCKRELVRNQIINENKRADGRGLKDVRKIDIETNILPSAHGSCLFTRGQTQALVVATLGNDNDAQMSDMLTEKNPICEKFMVNYNFPGFSVGEASPIKAPGRRELGHGNLAKRALYPSVDADYIHTIRLVSEILESNGSSSMATVCGGALALRAAGVKSEKLVAGVAMGLVFEEEKYAILTDIMGLEDHDGDMDFKVAGSHDGITALQMDIKLGGIEQKVLQEALYQAKEARGYILNLMQEACEKIIVNEAILPKVEIFNVDPNKIPDIIGQGGKTIKDIIEKFEVNIDLDRDKGEVKIAGIDHNLISQSKEYILNLLHSKGSNKRRDKKEMPKFDIGEEFLGRVQKVVEFGVFVELKEGVDGLLHNSKIKEKLEVGHEIKVKVAEIKNGKVSLDLA</sequence>
<dbReference type="EC" id="2.7.7.8" evidence="1"/>
<dbReference type="EMBL" id="CP000932">
    <property type="protein sequence ID" value="ACM63856.1"/>
    <property type="molecule type" value="Genomic_DNA"/>
</dbReference>
<dbReference type="RefSeq" id="WP_012661239.1">
    <property type="nucleotide sequence ID" value="NC_012039.1"/>
</dbReference>
<dbReference type="SMR" id="B9KFM1"/>
<dbReference type="STRING" id="306263.Cla_0508"/>
<dbReference type="KEGG" id="cla:CLA_0508"/>
<dbReference type="PATRIC" id="fig|306263.5.peg.504"/>
<dbReference type="eggNOG" id="COG1185">
    <property type="taxonomic scope" value="Bacteria"/>
</dbReference>
<dbReference type="HOGENOM" id="CLU_004217_2_2_7"/>
<dbReference type="Proteomes" id="UP000007727">
    <property type="component" value="Chromosome"/>
</dbReference>
<dbReference type="GO" id="GO:0005829">
    <property type="term" value="C:cytosol"/>
    <property type="evidence" value="ECO:0007669"/>
    <property type="project" value="TreeGrafter"/>
</dbReference>
<dbReference type="GO" id="GO:0000175">
    <property type="term" value="F:3'-5'-RNA exonuclease activity"/>
    <property type="evidence" value="ECO:0007669"/>
    <property type="project" value="TreeGrafter"/>
</dbReference>
<dbReference type="GO" id="GO:0000287">
    <property type="term" value="F:magnesium ion binding"/>
    <property type="evidence" value="ECO:0007669"/>
    <property type="project" value="UniProtKB-UniRule"/>
</dbReference>
<dbReference type="GO" id="GO:0004654">
    <property type="term" value="F:polyribonucleotide nucleotidyltransferase activity"/>
    <property type="evidence" value="ECO:0007669"/>
    <property type="project" value="UniProtKB-UniRule"/>
</dbReference>
<dbReference type="GO" id="GO:0003723">
    <property type="term" value="F:RNA binding"/>
    <property type="evidence" value="ECO:0007669"/>
    <property type="project" value="UniProtKB-UniRule"/>
</dbReference>
<dbReference type="GO" id="GO:0006402">
    <property type="term" value="P:mRNA catabolic process"/>
    <property type="evidence" value="ECO:0007669"/>
    <property type="project" value="UniProtKB-UniRule"/>
</dbReference>
<dbReference type="GO" id="GO:0006396">
    <property type="term" value="P:RNA processing"/>
    <property type="evidence" value="ECO:0007669"/>
    <property type="project" value="InterPro"/>
</dbReference>
<dbReference type="CDD" id="cd02393">
    <property type="entry name" value="KH-I_PNPase"/>
    <property type="match status" value="1"/>
</dbReference>
<dbReference type="CDD" id="cd11364">
    <property type="entry name" value="RNase_PH_PNPase_2"/>
    <property type="match status" value="1"/>
</dbReference>
<dbReference type="FunFam" id="3.30.1370.10:FF:000001">
    <property type="entry name" value="Polyribonucleotide nucleotidyltransferase"/>
    <property type="match status" value="1"/>
</dbReference>
<dbReference type="FunFam" id="3.30.230.70:FF:000026">
    <property type="entry name" value="Polyribonucleotide nucleotidyltransferase"/>
    <property type="match status" value="1"/>
</dbReference>
<dbReference type="FunFam" id="3.30.230.70:FF:000029">
    <property type="entry name" value="Polyribonucleotide nucleotidyltransferase"/>
    <property type="match status" value="1"/>
</dbReference>
<dbReference type="Gene3D" id="3.30.230.70">
    <property type="entry name" value="GHMP Kinase, N-terminal domain"/>
    <property type="match status" value="2"/>
</dbReference>
<dbReference type="Gene3D" id="3.30.1370.10">
    <property type="entry name" value="K Homology domain, type 1"/>
    <property type="match status" value="1"/>
</dbReference>
<dbReference type="Gene3D" id="2.40.50.140">
    <property type="entry name" value="Nucleic acid-binding proteins"/>
    <property type="match status" value="1"/>
</dbReference>
<dbReference type="HAMAP" id="MF_01595">
    <property type="entry name" value="PNPase"/>
    <property type="match status" value="1"/>
</dbReference>
<dbReference type="InterPro" id="IPR001247">
    <property type="entry name" value="ExoRNase_PH_dom1"/>
</dbReference>
<dbReference type="InterPro" id="IPR015847">
    <property type="entry name" value="ExoRNase_PH_dom2"/>
</dbReference>
<dbReference type="InterPro" id="IPR036345">
    <property type="entry name" value="ExoRNase_PH_dom2_sf"/>
</dbReference>
<dbReference type="InterPro" id="IPR004087">
    <property type="entry name" value="KH_dom"/>
</dbReference>
<dbReference type="InterPro" id="IPR004088">
    <property type="entry name" value="KH_dom_type_1"/>
</dbReference>
<dbReference type="InterPro" id="IPR036612">
    <property type="entry name" value="KH_dom_type_1_sf"/>
</dbReference>
<dbReference type="InterPro" id="IPR012340">
    <property type="entry name" value="NA-bd_OB-fold"/>
</dbReference>
<dbReference type="InterPro" id="IPR012162">
    <property type="entry name" value="PNPase"/>
</dbReference>
<dbReference type="InterPro" id="IPR027408">
    <property type="entry name" value="PNPase/RNase_PH_dom_sf"/>
</dbReference>
<dbReference type="InterPro" id="IPR015848">
    <property type="entry name" value="PNPase_PH_RNA-bd_bac/org-type"/>
</dbReference>
<dbReference type="InterPro" id="IPR036456">
    <property type="entry name" value="PNPase_PH_RNA-bd_sf"/>
</dbReference>
<dbReference type="InterPro" id="IPR020568">
    <property type="entry name" value="Ribosomal_Su5_D2-typ_SF"/>
</dbReference>
<dbReference type="InterPro" id="IPR003029">
    <property type="entry name" value="S1_domain"/>
</dbReference>
<dbReference type="NCBIfam" id="TIGR03591">
    <property type="entry name" value="polynuc_phos"/>
    <property type="match status" value="1"/>
</dbReference>
<dbReference type="NCBIfam" id="NF008805">
    <property type="entry name" value="PRK11824.1"/>
    <property type="match status" value="1"/>
</dbReference>
<dbReference type="PANTHER" id="PTHR11252">
    <property type="entry name" value="POLYRIBONUCLEOTIDE NUCLEOTIDYLTRANSFERASE"/>
    <property type="match status" value="1"/>
</dbReference>
<dbReference type="PANTHER" id="PTHR11252:SF0">
    <property type="entry name" value="POLYRIBONUCLEOTIDE NUCLEOTIDYLTRANSFERASE 1, MITOCHONDRIAL"/>
    <property type="match status" value="1"/>
</dbReference>
<dbReference type="Pfam" id="PF00013">
    <property type="entry name" value="KH_1"/>
    <property type="match status" value="1"/>
</dbReference>
<dbReference type="Pfam" id="PF03726">
    <property type="entry name" value="PNPase"/>
    <property type="match status" value="1"/>
</dbReference>
<dbReference type="Pfam" id="PF01138">
    <property type="entry name" value="RNase_PH"/>
    <property type="match status" value="2"/>
</dbReference>
<dbReference type="Pfam" id="PF03725">
    <property type="entry name" value="RNase_PH_C"/>
    <property type="match status" value="2"/>
</dbReference>
<dbReference type="Pfam" id="PF00575">
    <property type="entry name" value="S1"/>
    <property type="match status" value="1"/>
</dbReference>
<dbReference type="PIRSF" id="PIRSF005499">
    <property type="entry name" value="PNPase"/>
    <property type="match status" value="1"/>
</dbReference>
<dbReference type="SMART" id="SM00322">
    <property type="entry name" value="KH"/>
    <property type="match status" value="1"/>
</dbReference>
<dbReference type="SMART" id="SM00316">
    <property type="entry name" value="S1"/>
    <property type="match status" value="1"/>
</dbReference>
<dbReference type="SUPFAM" id="SSF54791">
    <property type="entry name" value="Eukaryotic type KH-domain (KH-domain type I)"/>
    <property type="match status" value="1"/>
</dbReference>
<dbReference type="SUPFAM" id="SSF50249">
    <property type="entry name" value="Nucleic acid-binding proteins"/>
    <property type="match status" value="1"/>
</dbReference>
<dbReference type="SUPFAM" id="SSF46915">
    <property type="entry name" value="Polynucleotide phosphorylase/guanosine pentaphosphate synthase (PNPase/GPSI), domain 3"/>
    <property type="match status" value="1"/>
</dbReference>
<dbReference type="SUPFAM" id="SSF55666">
    <property type="entry name" value="Ribonuclease PH domain 2-like"/>
    <property type="match status" value="2"/>
</dbReference>
<dbReference type="SUPFAM" id="SSF54211">
    <property type="entry name" value="Ribosomal protein S5 domain 2-like"/>
    <property type="match status" value="2"/>
</dbReference>
<dbReference type="PROSITE" id="PS50084">
    <property type="entry name" value="KH_TYPE_1"/>
    <property type="match status" value="1"/>
</dbReference>
<dbReference type="PROSITE" id="PS50126">
    <property type="entry name" value="S1"/>
    <property type="match status" value="1"/>
</dbReference>
<reference key="1">
    <citation type="journal article" date="2008" name="Foodborne Pathog. Dis.">
        <title>The complete genome sequence and analysis of the human pathogen Campylobacter lari.</title>
        <authorList>
            <person name="Miller W.G."/>
            <person name="Wang G."/>
            <person name="Binnewies T.T."/>
            <person name="Parker C.T."/>
        </authorList>
    </citation>
    <scope>NUCLEOTIDE SEQUENCE [LARGE SCALE GENOMIC DNA]</scope>
    <source>
        <strain>RM2100 / D67 / ATCC BAA-1060</strain>
    </source>
</reference>
<feature type="chain" id="PRO_0000381872" description="Polyribonucleotide nucleotidyltransferase">
    <location>
        <begin position="1"/>
        <end position="702"/>
    </location>
</feature>
<feature type="domain" description="KH" evidence="1">
    <location>
        <begin position="559"/>
        <end position="619"/>
    </location>
</feature>
<feature type="domain" description="S1 motif" evidence="1">
    <location>
        <begin position="643"/>
        <end position="702"/>
    </location>
</feature>
<feature type="binding site" evidence="1">
    <location>
        <position position="493"/>
    </location>
    <ligand>
        <name>Mg(2+)</name>
        <dbReference type="ChEBI" id="CHEBI:18420"/>
    </ligand>
</feature>
<feature type="binding site" evidence="1">
    <location>
        <position position="499"/>
    </location>
    <ligand>
        <name>Mg(2+)</name>
        <dbReference type="ChEBI" id="CHEBI:18420"/>
    </ligand>
</feature>
<keyword id="KW-0963">Cytoplasm</keyword>
<keyword id="KW-0460">Magnesium</keyword>
<keyword id="KW-0479">Metal-binding</keyword>
<keyword id="KW-0548">Nucleotidyltransferase</keyword>
<keyword id="KW-1185">Reference proteome</keyword>
<keyword id="KW-0694">RNA-binding</keyword>
<keyword id="KW-0808">Transferase</keyword>
<comment type="function">
    <text evidence="1">Involved in mRNA degradation. Catalyzes the phosphorolysis of single-stranded polyribonucleotides processively in the 3'- to 5'-direction.</text>
</comment>
<comment type="catalytic activity">
    <reaction evidence="1">
        <text>RNA(n+1) + phosphate = RNA(n) + a ribonucleoside 5'-diphosphate</text>
        <dbReference type="Rhea" id="RHEA:22096"/>
        <dbReference type="Rhea" id="RHEA-COMP:14527"/>
        <dbReference type="Rhea" id="RHEA-COMP:17342"/>
        <dbReference type="ChEBI" id="CHEBI:43474"/>
        <dbReference type="ChEBI" id="CHEBI:57930"/>
        <dbReference type="ChEBI" id="CHEBI:140395"/>
        <dbReference type="EC" id="2.7.7.8"/>
    </reaction>
</comment>
<comment type="cofactor">
    <cofactor evidence="1">
        <name>Mg(2+)</name>
        <dbReference type="ChEBI" id="CHEBI:18420"/>
    </cofactor>
</comment>
<comment type="subcellular location">
    <subcellularLocation>
        <location evidence="1">Cytoplasm</location>
    </subcellularLocation>
</comment>
<comment type="similarity">
    <text evidence="1">Belongs to the polyribonucleotide nucleotidyltransferase family.</text>
</comment>
<organism>
    <name type="scientific">Campylobacter lari (strain RM2100 / D67 / ATCC BAA-1060)</name>
    <dbReference type="NCBI Taxonomy" id="306263"/>
    <lineage>
        <taxon>Bacteria</taxon>
        <taxon>Pseudomonadati</taxon>
        <taxon>Campylobacterota</taxon>
        <taxon>Epsilonproteobacteria</taxon>
        <taxon>Campylobacterales</taxon>
        <taxon>Campylobacteraceae</taxon>
        <taxon>Campylobacter</taxon>
    </lineage>
</organism>
<proteinExistence type="inferred from homology"/>
<evidence type="ECO:0000255" key="1">
    <source>
        <dbReference type="HAMAP-Rule" id="MF_01595"/>
    </source>
</evidence>